<accession>Q8R0S6</accession>
<proteinExistence type="evidence at transcript level"/>
<dbReference type="EMBL" id="AC159277">
    <property type="status" value="NOT_ANNOTATED_CDS"/>
    <property type="molecule type" value="Genomic_DNA"/>
</dbReference>
<dbReference type="EMBL" id="BC026460">
    <property type="protein sequence ID" value="AAH26460.1"/>
    <property type="molecule type" value="mRNA"/>
</dbReference>
<dbReference type="CCDS" id="CCDS50038.1"/>
<dbReference type="RefSeq" id="NP_001093924.1">
    <property type="nucleotide sequence ID" value="NM_001100454.1"/>
</dbReference>
<dbReference type="FunCoup" id="Q8R0S6">
    <property type="interactions" value="525"/>
</dbReference>
<dbReference type="STRING" id="10090.ENSMUSP00000135083"/>
<dbReference type="MEROPS" id="I02.033"/>
<dbReference type="MEROPS" id="I02.953"/>
<dbReference type="GlyCosmos" id="Q8R0S6">
    <property type="glycosylation" value="1 site, No reported glycans"/>
</dbReference>
<dbReference type="GlyGen" id="Q8R0S6">
    <property type="glycosylation" value="2 sites"/>
</dbReference>
<dbReference type="PhosphoSitePlus" id="Q8R0S6"/>
<dbReference type="PaxDb" id="10090-ENSMUSP00000093141"/>
<dbReference type="ProteomicsDB" id="297846"/>
<dbReference type="Antibodypedia" id="42371">
    <property type="antibodies" value="42 antibodies from 11 providers"/>
</dbReference>
<dbReference type="DNASU" id="215001"/>
<dbReference type="Ensembl" id="ENSMUST00000176696.3">
    <property type="protein sequence ID" value="ENSMUSP00000135083.3"/>
    <property type="gene ID" value="ENSMUSG00000071192.7"/>
</dbReference>
<dbReference type="GeneID" id="215001"/>
<dbReference type="KEGG" id="mmu:215001"/>
<dbReference type="UCSC" id="uc008bcm.2">
    <property type="organism name" value="mouse"/>
</dbReference>
<dbReference type="AGR" id="MGI:2670967"/>
<dbReference type="CTD" id="117166"/>
<dbReference type="MGI" id="MGI:2670967">
    <property type="gene designation" value="Wfikkn1"/>
</dbReference>
<dbReference type="VEuPathDB" id="HostDB:ENSMUSG00000071192"/>
<dbReference type="eggNOG" id="KOG4597">
    <property type="taxonomic scope" value="Eukaryota"/>
</dbReference>
<dbReference type="GeneTree" id="ENSGT00940000158031"/>
<dbReference type="HOGENOM" id="CLU_037211_1_0_1"/>
<dbReference type="InParanoid" id="Q8R0S6"/>
<dbReference type="OMA" id="NFIMRPD"/>
<dbReference type="OrthoDB" id="8187079at2759"/>
<dbReference type="PhylomeDB" id="Q8R0S6"/>
<dbReference type="TreeFam" id="TF315349"/>
<dbReference type="BioGRID-ORCS" id="215001">
    <property type="hits" value="5 hits in 81 CRISPR screens"/>
</dbReference>
<dbReference type="PRO" id="PR:Q8R0S6"/>
<dbReference type="Proteomes" id="UP000000589">
    <property type="component" value="Chromosome 17"/>
</dbReference>
<dbReference type="RNAct" id="Q8R0S6">
    <property type="molecule type" value="protein"/>
</dbReference>
<dbReference type="Bgee" id="ENSMUSG00000071192">
    <property type="expression patterns" value="Expressed in ear vesicle and 52 other cell types or tissues"/>
</dbReference>
<dbReference type="ExpressionAtlas" id="Q8R0S6">
    <property type="expression patterns" value="baseline and differential"/>
</dbReference>
<dbReference type="GO" id="GO:0005576">
    <property type="term" value="C:extracellular region"/>
    <property type="evidence" value="ECO:0000314"/>
    <property type="project" value="MGI"/>
</dbReference>
<dbReference type="GO" id="GO:0048019">
    <property type="term" value="F:receptor antagonist activity"/>
    <property type="evidence" value="ECO:0007669"/>
    <property type="project" value="Ensembl"/>
</dbReference>
<dbReference type="GO" id="GO:0004867">
    <property type="term" value="F:serine-type endopeptidase inhibitor activity"/>
    <property type="evidence" value="ECO:0007669"/>
    <property type="project" value="UniProtKB-KW"/>
</dbReference>
<dbReference type="GO" id="GO:0050431">
    <property type="term" value="F:transforming growth factor beta binding"/>
    <property type="evidence" value="ECO:0007669"/>
    <property type="project" value="Ensembl"/>
</dbReference>
<dbReference type="GO" id="GO:0055001">
    <property type="term" value="P:muscle cell development"/>
    <property type="evidence" value="ECO:0000315"/>
    <property type="project" value="MGI"/>
</dbReference>
<dbReference type="GO" id="GO:0045861">
    <property type="term" value="P:negative regulation of proteolysis"/>
    <property type="evidence" value="ECO:0000266"/>
    <property type="project" value="MGI"/>
</dbReference>
<dbReference type="GO" id="GO:0030512">
    <property type="term" value="P:negative regulation of transforming growth factor beta receptor signaling pathway"/>
    <property type="evidence" value="ECO:0007669"/>
    <property type="project" value="Ensembl"/>
</dbReference>
<dbReference type="GO" id="GO:0060021">
    <property type="term" value="P:roof of mouth development"/>
    <property type="evidence" value="ECO:0000316"/>
    <property type="project" value="MGI"/>
</dbReference>
<dbReference type="GO" id="GO:0001501">
    <property type="term" value="P:skeletal system development"/>
    <property type="evidence" value="ECO:0000316"/>
    <property type="project" value="MGI"/>
</dbReference>
<dbReference type="CDD" id="cd05765">
    <property type="entry name" value="IgI_3_WFIKKN-like"/>
    <property type="match status" value="1"/>
</dbReference>
<dbReference type="CDD" id="cd00104">
    <property type="entry name" value="KAZAL_FS"/>
    <property type="match status" value="1"/>
</dbReference>
<dbReference type="CDD" id="cd22606">
    <property type="entry name" value="Kunitz_WFIKKN_2-like"/>
    <property type="match status" value="1"/>
</dbReference>
<dbReference type="FunFam" id="4.10.410.10:FF:000002">
    <property type="entry name" value="WAP, follistatin/kazal, immunoglobulin, kunitz and netrin domain-containing 2"/>
    <property type="match status" value="1"/>
</dbReference>
<dbReference type="FunFam" id="4.10.410.10:FF:000022">
    <property type="entry name" value="WAP, Kazal, immunoglobulin, Kunitz and NTR domain-containing protein 1"/>
    <property type="match status" value="1"/>
</dbReference>
<dbReference type="FunFam" id="2.40.50.120:FF:000004">
    <property type="entry name" value="WAP, Kazal, immunoglobulin, Kunitz and NTR domain-containing protein 2"/>
    <property type="match status" value="1"/>
</dbReference>
<dbReference type="FunFam" id="2.60.40.10:FF:000473">
    <property type="entry name" value="WAP, Kazal, immunoglobulin, Kunitz and NTR domain-containing protein 2"/>
    <property type="match status" value="1"/>
</dbReference>
<dbReference type="FunFam" id="3.30.60.30:FF:000014">
    <property type="entry name" value="WAP, Kazal, immunoglobulin, Kunitz and NTR domain-containing protein 2"/>
    <property type="match status" value="1"/>
</dbReference>
<dbReference type="FunFam" id="4.10.75.10:FF:000002">
    <property type="entry name" value="WAP, Kazal, immunoglobulin, Kunitz and NTR domain-containing protein 2"/>
    <property type="match status" value="1"/>
</dbReference>
<dbReference type="Gene3D" id="2.40.50.120">
    <property type="match status" value="1"/>
</dbReference>
<dbReference type="Gene3D" id="3.30.60.30">
    <property type="match status" value="1"/>
</dbReference>
<dbReference type="Gene3D" id="4.10.75.10">
    <property type="entry name" value="Elafin-like"/>
    <property type="match status" value="1"/>
</dbReference>
<dbReference type="Gene3D" id="2.60.40.10">
    <property type="entry name" value="Immunoglobulins"/>
    <property type="match status" value="1"/>
</dbReference>
<dbReference type="Gene3D" id="4.10.410.10">
    <property type="entry name" value="Pancreatic trypsin inhibitor Kunitz domain"/>
    <property type="match status" value="2"/>
</dbReference>
<dbReference type="InterPro" id="IPR036645">
    <property type="entry name" value="Elafin-like_sf"/>
</dbReference>
<dbReference type="InterPro" id="IPR007110">
    <property type="entry name" value="Ig-like_dom"/>
</dbReference>
<dbReference type="InterPro" id="IPR036179">
    <property type="entry name" value="Ig-like_dom_sf"/>
</dbReference>
<dbReference type="InterPro" id="IPR013783">
    <property type="entry name" value="Ig-like_fold"/>
</dbReference>
<dbReference type="InterPro" id="IPR003599">
    <property type="entry name" value="Ig_sub"/>
</dbReference>
<dbReference type="InterPro" id="IPR003598">
    <property type="entry name" value="Ig_sub2"/>
</dbReference>
<dbReference type="InterPro" id="IPR002350">
    <property type="entry name" value="Kazal_dom"/>
</dbReference>
<dbReference type="InterPro" id="IPR036058">
    <property type="entry name" value="Kazal_dom_sf"/>
</dbReference>
<dbReference type="InterPro" id="IPR002223">
    <property type="entry name" value="Kunitz_BPTI"/>
</dbReference>
<dbReference type="InterPro" id="IPR036880">
    <property type="entry name" value="Kunitz_BPTI_sf"/>
</dbReference>
<dbReference type="InterPro" id="IPR001134">
    <property type="entry name" value="Netrin_domain"/>
</dbReference>
<dbReference type="InterPro" id="IPR020901">
    <property type="entry name" value="Prtase_inh_Kunz-CS"/>
</dbReference>
<dbReference type="InterPro" id="IPR008993">
    <property type="entry name" value="TIMP-like_OB-fold"/>
</dbReference>
<dbReference type="InterPro" id="IPR008197">
    <property type="entry name" value="WAP_dom"/>
</dbReference>
<dbReference type="InterPro" id="IPR033638">
    <property type="entry name" value="WFIKKN1/2_Ig-like_3"/>
</dbReference>
<dbReference type="PANTHER" id="PTHR45938">
    <property type="entry name" value="ACP24A4-RELATED"/>
    <property type="match status" value="1"/>
</dbReference>
<dbReference type="PANTHER" id="PTHR45938:SF6">
    <property type="entry name" value="WAP, KAZAL, IMMUNOGLOBULIN, KUNITZ AND NTR DOMAIN-CONTAINING PROTEIN 1"/>
    <property type="match status" value="1"/>
</dbReference>
<dbReference type="Pfam" id="PF13927">
    <property type="entry name" value="Ig_3"/>
    <property type="match status" value="1"/>
</dbReference>
<dbReference type="Pfam" id="PF00014">
    <property type="entry name" value="Kunitz_BPTI"/>
    <property type="match status" value="2"/>
</dbReference>
<dbReference type="Pfam" id="PF00095">
    <property type="entry name" value="WAP"/>
    <property type="match status" value="1"/>
</dbReference>
<dbReference type="PRINTS" id="PR00759">
    <property type="entry name" value="BASICPTASE"/>
</dbReference>
<dbReference type="SMART" id="SM00409">
    <property type="entry name" value="IG"/>
    <property type="match status" value="1"/>
</dbReference>
<dbReference type="SMART" id="SM00408">
    <property type="entry name" value="IGc2"/>
    <property type="match status" value="1"/>
</dbReference>
<dbReference type="SMART" id="SM00131">
    <property type="entry name" value="KU"/>
    <property type="match status" value="2"/>
</dbReference>
<dbReference type="SMART" id="SM00217">
    <property type="entry name" value="WAP"/>
    <property type="match status" value="1"/>
</dbReference>
<dbReference type="SUPFAM" id="SSF57362">
    <property type="entry name" value="BPTI-like"/>
    <property type="match status" value="2"/>
</dbReference>
<dbReference type="SUPFAM" id="SSF57256">
    <property type="entry name" value="Elafin-like"/>
    <property type="match status" value="1"/>
</dbReference>
<dbReference type="SUPFAM" id="SSF48726">
    <property type="entry name" value="Immunoglobulin"/>
    <property type="match status" value="1"/>
</dbReference>
<dbReference type="SUPFAM" id="SSF100895">
    <property type="entry name" value="Kazal-type serine protease inhibitors"/>
    <property type="match status" value="1"/>
</dbReference>
<dbReference type="SUPFAM" id="SSF50242">
    <property type="entry name" value="TIMP-like"/>
    <property type="match status" value="1"/>
</dbReference>
<dbReference type="PROSITE" id="PS00280">
    <property type="entry name" value="BPTI_KUNITZ_1"/>
    <property type="match status" value="1"/>
</dbReference>
<dbReference type="PROSITE" id="PS50279">
    <property type="entry name" value="BPTI_KUNITZ_2"/>
    <property type="match status" value="2"/>
</dbReference>
<dbReference type="PROSITE" id="PS50835">
    <property type="entry name" value="IG_LIKE"/>
    <property type="match status" value="1"/>
</dbReference>
<dbReference type="PROSITE" id="PS51465">
    <property type="entry name" value="KAZAL_2"/>
    <property type="match status" value="1"/>
</dbReference>
<dbReference type="PROSITE" id="PS50189">
    <property type="entry name" value="NTR"/>
    <property type="match status" value="1"/>
</dbReference>
<dbReference type="PROSITE" id="PS51390">
    <property type="entry name" value="WAP"/>
    <property type="match status" value="1"/>
</dbReference>
<protein>
    <recommendedName>
        <fullName>WAP, Kazal, immunoglobulin, Kunitz and NTR domain-containing protein 1</fullName>
    </recommendedName>
    <alternativeName>
        <fullName>Growth and differentiation factor-associated serum protein 2</fullName>
        <shortName>GASP-2</shortName>
        <shortName>mGASP-2</shortName>
    </alternativeName>
</protein>
<organism>
    <name type="scientific">Mus musculus</name>
    <name type="common">Mouse</name>
    <dbReference type="NCBI Taxonomy" id="10090"/>
    <lineage>
        <taxon>Eukaryota</taxon>
        <taxon>Metazoa</taxon>
        <taxon>Chordata</taxon>
        <taxon>Craniata</taxon>
        <taxon>Vertebrata</taxon>
        <taxon>Euteleostomi</taxon>
        <taxon>Mammalia</taxon>
        <taxon>Eutheria</taxon>
        <taxon>Euarchontoglires</taxon>
        <taxon>Glires</taxon>
        <taxon>Rodentia</taxon>
        <taxon>Myomorpha</taxon>
        <taxon>Muroidea</taxon>
        <taxon>Muridae</taxon>
        <taxon>Murinae</taxon>
        <taxon>Mus</taxon>
        <taxon>Mus</taxon>
    </lineage>
</organism>
<feature type="signal peptide" evidence="2">
    <location>
        <begin position="1"/>
        <end position="25"/>
    </location>
</feature>
<feature type="chain" id="PRO_0000307817" description="WAP, Kazal, immunoglobulin, Kunitz and NTR domain-containing protein 1">
    <location>
        <begin position="26"/>
        <end position="552"/>
    </location>
</feature>
<feature type="domain" description="WAP" evidence="5">
    <location>
        <begin position="29"/>
        <end position="82"/>
    </location>
</feature>
<feature type="domain" description="Kazal-like" evidence="6">
    <location>
        <begin position="112"/>
        <end position="163"/>
    </location>
</feature>
<feature type="domain" description="Ig-like C2-type">
    <location>
        <begin position="190"/>
        <end position="283"/>
    </location>
</feature>
<feature type="domain" description="BPTI/Kunitz inhibitor 1" evidence="3">
    <location>
        <begin position="289"/>
        <end position="355"/>
    </location>
</feature>
<feature type="domain" description="BPTI/Kunitz inhibitor 2" evidence="3">
    <location>
        <begin position="363"/>
        <end position="413"/>
    </location>
</feature>
<feature type="domain" description="NTR" evidence="4">
    <location>
        <begin position="413"/>
        <end position="544"/>
    </location>
</feature>
<feature type="site" description="Reactive bond" evidence="6">
    <location>
        <begin position="126"/>
        <end position="127"/>
    </location>
</feature>
<feature type="glycosylation site" description="N-linked (GlcNAc...) asparagine" evidence="2">
    <location>
        <position position="497"/>
    </location>
</feature>
<feature type="disulfide bond" evidence="1">
    <location>
        <begin position="36"/>
        <end position="69"/>
    </location>
</feature>
<feature type="disulfide bond" evidence="1">
    <location>
        <begin position="52"/>
        <end position="73"/>
    </location>
</feature>
<feature type="disulfide bond" evidence="1">
    <location>
        <begin position="56"/>
        <end position="68"/>
    </location>
</feature>
<feature type="disulfide bond" evidence="1">
    <location>
        <begin position="62"/>
        <end position="78"/>
    </location>
</feature>
<feature type="disulfide bond" evidence="1">
    <location>
        <begin position="120"/>
        <end position="150"/>
    </location>
</feature>
<feature type="disulfide bond" evidence="1">
    <location>
        <begin position="124"/>
        <end position="143"/>
    </location>
</feature>
<feature type="disulfide bond" evidence="1">
    <location>
        <begin position="132"/>
        <end position="161"/>
    </location>
</feature>
<feature type="disulfide bond" evidence="1">
    <location>
        <begin position="211"/>
        <end position="267"/>
    </location>
</feature>
<feature type="disulfide bond" evidence="1">
    <location>
        <begin position="303"/>
        <end position="355"/>
    </location>
</feature>
<feature type="disulfide bond" evidence="1">
    <location>
        <begin position="310"/>
        <end position="338"/>
    </location>
</feature>
<feature type="disulfide bond" evidence="1">
    <location>
        <begin position="330"/>
        <end position="351"/>
    </location>
</feature>
<feature type="disulfide bond" evidence="1">
    <location>
        <begin position="363"/>
        <end position="413"/>
    </location>
</feature>
<feature type="disulfide bond" evidence="1">
    <location>
        <begin position="372"/>
        <end position="396"/>
    </location>
</feature>
<feature type="disulfide bond" evidence="1">
    <location>
        <begin position="388"/>
        <end position="409"/>
    </location>
</feature>
<feature type="disulfide bond" evidence="1">
    <location>
        <begin position="421"/>
        <end position="493"/>
    </location>
</feature>
<feature type="disulfide bond" evidence="1">
    <location>
        <begin position="424"/>
        <end position="495"/>
    </location>
</feature>
<feature type="disulfide bond" evidence="1">
    <location>
        <begin position="435"/>
        <end position="544"/>
    </location>
</feature>
<keyword id="KW-1015">Disulfide bond</keyword>
<keyword id="KW-0325">Glycoprotein</keyword>
<keyword id="KW-0393">Immunoglobulin domain</keyword>
<keyword id="KW-0481">Metalloenzyme inhibitor</keyword>
<keyword id="KW-0483">Metalloprotease inhibitor</keyword>
<keyword id="KW-0646">Protease inhibitor</keyword>
<keyword id="KW-1185">Reference proteome</keyword>
<keyword id="KW-0677">Repeat</keyword>
<keyword id="KW-0964">Secreted</keyword>
<keyword id="KW-0722">Serine protease inhibitor</keyword>
<keyword id="KW-0732">Signal</keyword>
<comment type="function">
    <text evidence="1">Protease-inhibitor that contains multiple distinct protease inhibitor domains. Probably has serine protease- and metalloprotease-inhibitor activity (By similarity).</text>
</comment>
<comment type="subcellular location">
    <subcellularLocation>
        <location evidence="1">Secreted</location>
    </subcellularLocation>
</comment>
<comment type="domain">
    <text evidence="1">The second BPTI/Kunitz inhibitor domain is able to inhibit trypsin. It has however no activity toward chymotrypsin, elastase, plasmin, pancreatic kallikrein, lung tryptase, plasma kallikrein, thrombin, urokinase or tissue plasminogen activator (By similarity).</text>
</comment>
<comment type="similarity">
    <text evidence="7">Belongs to the WFIKKN family.</text>
</comment>
<reference key="1">
    <citation type="journal article" date="2009" name="PLoS Biol.">
        <title>Lineage-specific biology revealed by a finished genome assembly of the mouse.</title>
        <authorList>
            <person name="Church D.M."/>
            <person name="Goodstadt L."/>
            <person name="Hillier L.W."/>
            <person name="Zody M.C."/>
            <person name="Goldstein S."/>
            <person name="She X."/>
            <person name="Bult C.J."/>
            <person name="Agarwala R."/>
            <person name="Cherry J.L."/>
            <person name="DiCuccio M."/>
            <person name="Hlavina W."/>
            <person name="Kapustin Y."/>
            <person name="Meric P."/>
            <person name="Maglott D."/>
            <person name="Birtle Z."/>
            <person name="Marques A.C."/>
            <person name="Graves T."/>
            <person name="Zhou S."/>
            <person name="Teague B."/>
            <person name="Potamousis K."/>
            <person name="Churas C."/>
            <person name="Place M."/>
            <person name="Herschleb J."/>
            <person name="Runnheim R."/>
            <person name="Forrest D."/>
            <person name="Amos-Landgraf J."/>
            <person name="Schwartz D.C."/>
            <person name="Cheng Z."/>
            <person name="Lindblad-Toh K."/>
            <person name="Eichler E.E."/>
            <person name="Ponting C.P."/>
        </authorList>
    </citation>
    <scope>NUCLEOTIDE SEQUENCE [LARGE SCALE GENOMIC DNA]</scope>
    <source>
        <strain>C57BL/6J</strain>
    </source>
</reference>
<reference key="2">
    <citation type="journal article" date="2004" name="Genome Res.">
        <title>The status, quality, and expansion of the NIH full-length cDNA project: the Mammalian Gene Collection (MGC).</title>
        <authorList>
            <consortium name="The MGC Project Team"/>
        </authorList>
    </citation>
    <scope>NUCLEOTIDE SEQUENCE [LARGE SCALE MRNA] OF 331-552</scope>
    <source>
        <tissue>Eye</tissue>
    </source>
</reference>
<reference key="3">
    <citation type="journal article" date="2003" name="Mol. Endocrinol.">
        <title>Regulation of myostatin in vivo by growth and differentiation factor-associated serum protein-1: a novel protein with protease inhibitor and follistatin domains.</title>
        <authorList>
            <person name="Hill J.J."/>
            <person name="Qiu Y."/>
            <person name="Hewick R.M."/>
            <person name="Wolfman N.M."/>
        </authorList>
    </citation>
    <scope>IDENTIFICATION</scope>
</reference>
<name>WFKN1_MOUSE</name>
<gene>
    <name type="primary">Wfikkn1</name>
    <name type="synonym">Gasp2</name>
</gene>
<evidence type="ECO:0000250" key="1"/>
<evidence type="ECO:0000255" key="2"/>
<evidence type="ECO:0000255" key="3">
    <source>
        <dbReference type="PROSITE-ProRule" id="PRU00031"/>
    </source>
</evidence>
<evidence type="ECO:0000255" key="4">
    <source>
        <dbReference type="PROSITE-ProRule" id="PRU00295"/>
    </source>
</evidence>
<evidence type="ECO:0000255" key="5">
    <source>
        <dbReference type="PROSITE-ProRule" id="PRU00722"/>
    </source>
</evidence>
<evidence type="ECO:0000255" key="6">
    <source>
        <dbReference type="PROSITE-ProRule" id="PRU00798"/>
    </source>
</evidence>
<evidence type="ECO:0000305" key="7"/>
<sequence>MPAPQPFLPLLFVFVLIHLTSETNLLPDPGSHPGMCPNELSPHLWVDAQSTCERECTGDQDCAASEKCCTNVCGLQSCVAARFPSGGPAVPETAASCEGFQCPQQGSDCDIWDGQPVCRCRDRCEKEPSFTCASDGLTYYNRCYMDAEACLRGLHLHVVPCKHILSWPPSSPGPPETTARPTPGAAPMPPALYNSPSPQAVHVGGTASLHCDVSGRPPPAVTWEKQSHQRENLIMRPDQMYGNVVVTSIGQLVLYNAQLEDAGLYTCTARNAAGLLRADFPLSVLQRATTQDRDPGIPALAECQADTQACVGPPTPHHVLWRFDPQRGSCMTFPALRCDGAARGFETYEACQQACVRGPGDVCALPAVQGPCQGWEPRWAYSPLLQQCHPFVYSGCEGNSNNFETRESCEDACPVPRTPPCRACRLKSKLALSLCRSDFAIVGRLTEVLEEPEAAGGIARVALDDVLKDDKMGLKFLGTKYLEVTLSGMDWACPCPNVTAVDGPLVIMGEVREGVAVLDANSYVRAASEKRVKKIVELLEKKACELLNRFQD</sequence>